<organism>
    <name type="scientific">Francisella tularensis subsp. holarctica (strain FTNF002-00 / FTA)</name>
    <dbReference type="NCBI Taxonomy" id="458234"/>
    <lineage>
        <taxon>Bacteria</taxon>
        <taxon>Pseudomonadati</taxon>
        <taxon>Pseudomonadota</taxon>
        <taxon>Gammaproteobacteria</taxon>
        <taxon>Thiotrichales</taxon>
        <taxon>Francisellaceae</taxon>
        <taxon>Francisella</taxon>
    </lineage>
</organism>
<dbReference type="EMBL" id="CP000803">
    <property type="protein sequence ID" value="ABU60732.1"/>
    <property type="molecule type" value="Genomic_DNA"/>
</dbReference>
<dbReference type="RefSeq" id="WP_011457354.1">
    <property type="nucleotide sequence ID" value="NC_009749.1"/>
</dbReference>
<dbReference type="SMR" id="A7N9S9"/>
<dbReference type="KEGG" id="fta:FTA_0255"/>
<dbReference type="HOGENOM" id="CLU_036235_2_1_6"/>
<dbReference type="GO" id="GO:0015934">
    <property type="term" value="C:large ribosomal subunit"/>
    <property type="evidence" value="ECO:0007669"/>
    <property type="project" value="InterPro"/>
</dbReference>
<dbReference type="GO" id="GO:0019843">
    <property type="term" value="F:rRNA binding"/>
    <property type="evidence" value="ECO:0007669"/>
    <property type="project" value="UniProtKB-UniRule"/>
</dbReference>
<dbReference type="GO" id="GO:0003735">
    <property type="term" value="F:structural constituent of ribosome"/>
    <property type="evidence" value="ECO:0007669"/>
    <property type="project" value="InterPro"/>
</dbReference>
<dbReference type="GO" id="GO:0016740">
    <property type="term" value="F:transferase activity"/>
    <property type="evidence" value="ECO:0007669"/>
    <property type="project" value="InterPro"/>
</dbReference>
<dbReference type="GO" id="GO:0002181">
    <property type="term" value="P:cytoplasmic translation"/>
    <property type="evidence" value="ECO:0007669"/>
    <property type="project" value="TreeGrafter"/>
</dbReference>
<dbReference type="FunFam" id="2.30.30.30:FF:000001">
    <property type="entry name" value="50S ribosomal protein L2"/>
    <property type="match status" value="1"/>
</dbReference>
<dbReference type="FunFam" id="2.40.50.140:FF:000003">
    <property type="entry name" value="50S ribosomal protein L2"/>
    <property type="match status" value="1"/>
</dbReference>
<dbReference type="FunFam" id="4.10.950.10:FF:000001">
    <property type="entry name" value="50S ribosomal protein L2"/>
    <property type="match status" value="1"/>
</dbReference>
<dbReference type="Gene3D" id="2.30.30.30">
    <property type="match status" value="1"/>
</dbReference>
<dbReference type="Gene3D" id="2.40.50.140">
    <property type="entry name" value="Nucleic acid-binding proteins"/>
    <property type="match status" value="1"/>
</dbReference>
<dbReference type="Gene3D" id="4.10.950.10">
    <property type="entry name" value="Ribosomal protein L2, domain 3"/>
    <property type="match status" value="1"/>
</dbReference>
<dbReference type="HAMAP" id="MF_01320_B">
    <property type="entry name" value="Ribosomal_uL2_B"/>
    <property type="match status" value="1"/>
</dbReference>
<dbReference type="InterPro" id="IPR012340">
    <property type="entry name" value="NA-bd_OB-fold"/>
</dbReference>
<dbReference type="InterPro" id="IPR014722">
    <property type="entry name" value="Rib_uL2_dom2"/>
</dbReference>
<dbReference type="InterPro" id="IPR002171">
    <property type="entry name" value="Ribosomal_uL2"/>
</dbReference>
<dbReference type="InterPro" id="IPR005880">
    <property type="entry name" value="Ribosomal_uL2_bac/org-type"/>
</dbReference>
<dbReference type="InterPro" id="IPR022669">
    <property type="entry name" value="Ribosomal_uL2_C"/>
</dbReference>
<dbReference type="InterPro" id="IPR022671">
    <property type="entry name" value="Ribosomal_uL2_CS"/>
</dbReference>
<dbReference type="InterPro" id="IPR014726">
    <property type="entry name" value="Ribosomal_uL2_dom3"/>
</dbReference>
<dbReference type="InterPro" id="IPR022666">
    <property type="entry name" value="Ribosomal_uL2_RNA-bd_dom"/>
</dbReference>
<dbReference type="InterPro" id="IPR008991">
    <property type="entry name" value="Translation_prot_SH3-like_sf"/>
</dbReference>
<dbReference type="NCBIfam" id="TIGR01171">
    <property type="entry name" value="rplB_bact"/>
    <property type="match status" value="1"/>
</dbReference>
<dbReference type="PANTHER" id="PTHR13691:SF5">
    <property type="entry name" value="LARGE RIBOSOMAL SUBUNIT PROTEIN UL2M"/>
    <property type="match status" value="1"/>
</dbReference>
<dbReference type="PANTHER" id="PTHR13691">
    <property type="entry name" value="RIBOSOMAL PROTEIN L2"/>
    <property type="match status" value="1"/>
</dbReference>
<dbReference type="Pfam" id="PF00181">
    <property type="entry name" value="Ribosomal_L2"/>
    <property type="match status" value="1"/>
</dbReference>
<dbReference type="Pfam" id="PF03947">
    <property type="entry name" value="Ribosomal_L2_C"/>
    <property type="match status" value="1"/>
</dbReference>
<dbReference type="PIRSF" id="PIRSF002158">
    <property type="entry name" value="Ribosomal_L2"/>
    <property type="match status" value="1"/>
</dbReference>
<dbReference type="SMART" id="SM01383">
    <property type="entry name" value="Ribosomal_L2"/>
    <property type="match status" value="1"/>
</dbReference>
<dbReference type="SMART" id="SM01382">
    <property type="entry name" value="Ribosomal_L2_C"/>
    <property type="match status" value="1"/>
</dbReference>
<dbReference type="SUPFAM" id="SSF50249">
    <property type="entry name" value="Nucleic acid-binding proteins"/>
    <property type="match status" value="1"/>
</dbReference>
<dbReference type="SUPFAM" id="SSF50104">
    <property type="entry name" value="Translation proteins SH3-like domain"/>
    <property type="match status" value="1"/>
</dbReference>
<dbReference type="PROSITE" id="PS00467">
    <property type="entry name" value="RIBOSOMAL_L2"/>
    <property type="match status" value="1"/>
</dbReference>
<proteinExistence type="inferred from homology"/>
<gene>
    <name evidence="1" type="primary">rplB</name>
    <name type="ordered locus">FTA_0255</name>
</gene>
<accession>A7N9S9</accession>
<reference key="1">
    <citation type="journal article" date="2009" name="PLoS ONE">
        <title>Complete genome sequence of Francisella tularensis subspecies holarctica FTNF002-00.</title>
        <authorList>
            <person name="Barabote R.D."/>
            <person name="Xie G."/>
            <person name="Brettin T.S."/>
            <person name="Hinrichs S.H."/>
            <person name="Fey P.D."/>
            <person name="Jay J.J."/>
            <person name="Engle J.L."/>
            <person name="Godbole S.D."/>
            <person name="Noronha J.M."/>
            <person name="Scheuermann R.H."/>
            <person name="Zhou L.W."/>
            <person name="Lion C."/>
            <person name="Dempsey M.P."/>
        </authorList>
    </citation>
    <scope>NUCLEOTIDE SEQUENCE [LARGE SCALE GENOMIC DNA]</scope>
    <source>
        <strain>FTNF002-00 / FTA</strain>
    </source>
</reference>
<comment type="function">
    <text evidence="1">One of the primary rRNA binding proteins. Required for association of the 30S and 50S subunits to form the 70S ribosome, for tRNA binding and peptide bond formation. It has been suggested to have peptidyltransferase activity; this is somewhat controversial. Makes several contacts with the 16S rRNA in the 70S ribosome.</text>
</comment>
<comment type="subunit">
    <text evidence="1">Part of the 50S ribosomal subunit. Forms a bridge to the 30S subunit in the 70S ribosome.</text>
</comment>
<comment type="similarity">
    <text evidence="1">Belongs to the universal ribosomal protein uL2 family.</text>
</comment>
<evidence type="ECO:0000255" key="1">
    <source>
        <dbReference type="HAMAP-Rule" id="MF_01320"/>
    </source>
</evidence>
<evidence type="ECO:0000256" key="2">
    <source>
        <dbReference type="SAM" id="MobiDB-lite"/>
    </source>
</evidence>
<evidence type="ECO:0000305" key="3"/>
<feature type="chain" id="PRO_1000051935" description="Large ribosomal subunit protein uL2">
    <location>
        <begin position="1"/>
        <end position="274"/>
    </location>
</feature>
<feature type="region of interest" description="Disordered" evidence="2">
    <location>
        <begin position="224"/>
        <end position="274"/>
    </location>
</feature>
<feature type="compositionally biased region" description="Basic residues" evidence="2">
    <location>
        <begin position="257"/>
        <end position="274"/>
    </location>
</feature>
<sequence length="274" mass="30401">MIEIKKAKPTSPGRRHVVSVKNTELHTGKPFKGLVEVKKSKAGRNNTGRITVRHQGGGHKQHYRIVDFKRNKDDITAKVERIEYDPNRSANIALVLYADGERRYIVAPKGLKKDMSVISGEKVDIAVGNCMPLRNIPLGTVIHNIEMKPKKGAQMIRSAGTFAQLVGKDNAYAIIRLRSGEMRRVLLDCRAVIGVVSNSEHNLKSLGKAGAKRWRGIRPTVRGVAMNPVDHPHGGGEGRTSGGRHPVTPWGIPTKGYKTRRNKRSNKLIVQKRK</sequence>
<name>RL2_FRATF</name>
<protein>
    <recommendedName>
        <fullName evidence="1">Large ribosomal subunit protein uL2</fullName>
    </recommendedName>
    <alternativeName>
        <fullName evidence="3">50S ribosomal protein L2</fullName>
    </alternativeName>
</protein>
<keyword id="KW-0687">Ribonucleoprotein</keyword>
<keyword id="KW-0689">Ribosomal protein</keyword>
<keyword id="KW-0694">RNA-binding</keyword>
<keyword id="KW-0699">rRNA-binding</keyword>